<proteinExistence type="inferred from homology"/>
<protein>
    <recommendedName>
        <fullName evidence="1">Uridine kinase</fullName>
        <ecNumber evidence="1">2.7.1.48</ecNumber>
    </recommendedName>
    <alternativeName>
        <fullName evidence="1">Cytidine monophosphokinase</fullName>
    </alternativeName>
    <alternativeName>
        <fullName evidence="1">Uridine monophosphokinase</fullName>
    </alternativeName>
</protein>
<comment type="catalytic activity">
    <reaction evidence="1">
        <text>uridine + ATP = UMP + ADP + H(+)</text>
        <dbReference type="Rhea" id="RHEA:16825"/>
        <dbReference type="ChEBI" id="CHEBI:15378"/>
        <dbReference type="ChEBI" id="CHEBI:16704"/>
        <dbReference type="ChEBI" id="CHEBI:30616"/>
        <dbReference type="ChEBI" id="CHEBI:57865"/>
        <dbReference type="ChEBI" id="CHEBI:456216"/>
        <dbReference type="EC" id="2.7.1.48"/>
    </reaction>
</comment>
<comment type="catalytic activity">
    <reaction evidence="1">
        <text>cytidine + ATP = CMP + ADP + H(+)</text>
        <dbReference type="Rhea" id="RHEA:24674"/>
        <dbReference type="ChEBI" id="CHEBI:15378"/>
        <dbReference type="ChEBI" id="CHEBI:17562"/>
        <dbReference type="ChEBI" id="CHEBI:30616"/>
        <dbReference type="ChEBI" id="CHEBI:60377"/>
        <dbReference type="ChEBI" id="CHEBI:456216"/>
        <dbReference type="EC" id="2.7.1.48"/>
    </reaction>
</comment>
<comment type="pathway">
    <text evidence="1">Pyrimidine metabolism; CTP biosynthesis via salvage pathway; CTP from cytidine: step 1/3.</text>
</comment>
<comment type="pathway">
    <text evidence="1">Pyrimidine metabolism; UMP biosynthesis via salvage pathway; UMP from uridine: step 1/1.</text>
</comment>
<comment type="subcellular location">
    <subcellularLocation>
        <location evidence="1">Cytoplasm</location>
    </subcellularLocation>
</comment>
<comment type="similarity">
    <text evidence="1">Belongs to the uridine kinase family.</text>
</comment>
<accession>A9N7M0</accession>
<name>URK_SALPB</name>
<reference key="1">
    <citation type="submission" date="2007-11" db="EMBL/GenBank/DDBJ databases">
        <authorList>
            <consortium name="The Salmonella enterica serovar Paratyphi B Genome Sequencing Project"/>
            <person name="McClelland M."/>
            <person name="Sanderson E.K."/>
            <person name="Porwollik S."/>
            <person name="Spieth J."/>
            <person name="Clifton W.S."/>
            <person name="Fulton R."/>
            <person name="Cordes M."/>
            <person name="Wollam A."/>
            <person name="Shah N."/>
            <person name="Pepin K."/>
            <person name="Bhonagiri V."/>
            <person name="Nash W."/>
            <person name="Johnson M."/>
            <person name="Thiruvilangam P."/>
            <person name="Wilson R."/>
        </authorList>
    </citation>
    <scope>NUCLEOTIDE SEQUENCE [LARGE SCALE GENOMIC DNA]</scope>
    <source>
        <strain>ATCC BAA-1250 / SPB7</strain>
    </source>
</reference>
<organism>
    <name type="scientific">Salmonella paratyphi B (strain ATCC BAA-1250 / SPB7)</name>
    <dbReference type="NCBI Taxonomy" id="1016998"/>
    <lineage>
        <taxon>Bacteria</taxon>
        <taxon>Pseudomonadati</taxon>
        <taxon>Pseudomonadota</taxon>
        <taxon>Gammaproteobacteria</taxon>
        <taxon>Enterobacterales</taxon>
        <taxon>Enterobacteriaceae</taxon>
        <taxon>Salmonella</taxon>
    </lineage>
</organism>
<sequence>MTDQSHQCVIIGIAGASASGKSLIASTLYRELREQVGDEHIGVIPEDSYYKDQSHLSMEERVKTNYDHPNAMDHSLLFQHLQALKRGSAIELPVYSYVEHTRMQETVRVEPKKVIILEGILLLTDARLREEMNFSIFVDTPLDICLMRRIKRDVNERGRSMDSVMAQYQKTVRPMFLQFIEPSKQYADIIVPRGGKNRIAIDILKAKISQFFE</sequence>
<gene>
    <name evidence="1" type="primary">udk</name>
    <name type="ordered locus">SPAB_00905</name>
</gene>
<feature type="chain" id="PRO_1000081969" description="Uridine kinase">
    <location>
        <begin position="1"/>
        <end position="213"/>
    </location>
</feature>
<feature type="binding site" evidence="1">
    <location>
        <begin position="15"/>
        <end position="22"/>
    </location>
    <ligand>
        <name>ATP</name>
        <dbReference type="ChEBI" id="CHEBI:30616"/>
    </ligand>
</feature>
<keyword id="KW-0067">ATP-binding</keyword>
<keyword id="KW-0963">Cytoplasm</keyword>
<keyword id="KW-0418">Kinase</keyword>
<keyword id="KW-0547">Nucleotide-binding</keyword>
<keyword id="KW-0808">Transferase</keyword>
<evidence type="ECO:0000255" key="1">
    <source>
        <dbReference type="HAMAP-Rule" id="MF_00551"/>
    </source>
</evidence>
<dbReference type="EC" id="2.7.1.48" evidence="1"/>
<dbReference type="EMBL" id="CP000886">
    <property type="protein sequence ID" value="ABX66327.1"/>
    <property type="molecule type" value="Genomic_DNA"/>
</dbReference>
<dbReference type="RefSeq" id="WP_000132082.1">
    <property type="nucleotide sequence ID" value="NC_010102.1"/>
</dbReference>
<dbReference type="SMR" id="A9N7M0"/>
<dbReference type="GeneID" id="66756602"/>
<dbReference type="KEGG" id="spq:SPAB_00905"/>
<dbReference type="PATRIC" id="fig|1016998.12.peg.849"/>
<dbReference type="HOGENOM" id="CLU_021278_1_2_6"/>
<dbReference type="BioCyc" id="SENT1016998:SPAB_RS03735-MONOMER"/>
<dbReference type="UniPathway" id="UPA00574">
    <property type="reaction ID" value="UER00637"/>
</dbReference>
<dbReference type="UniPathway" id="UPA00579">
    <property type="reaction ID" value="UER00640"/>
</dbReference>
<dbReference type="Proteomes" id="UP000008556">
    <property type="component" value="Chromosome"/>
</dbReference>
<dbReference type="GO" id="GO:0005737">
    <property type="term" value="C:cytoplasm"/>
    <property type="evidence" value="ECO:0007669"/>
    <property type="project" value="UniProtKB-SubCell"/>
</dbReference>
<dbReference type="GO" id="GO:0005524">
    <property type="term" value="F:ATP binding"/>
    <property type="evidence" value="ECO:0007669"/>
    <property type="project" value="UniProtKB-UniRule"/>
</dbReference>
<dbReference type="GO" id="GO:0043771">
    <property type="term" value="F:cytidine kinase activity"/>
    <property type="evidence" value="ECO:0007669"/>
    <property type="project" value="RHEA"/>
</dbReference>
<dbReference type="GO" id="GO:0004849">
    <property type="term" value="F:uridine kinase activity"/>
    <property type="evidence" value="ECO:0007669"/>
    <property type="project" value="UniProtKB-UniRule"/>
</dbReference>
<dbReference type="GO" id="GO:0044211">
    <property type="term" value="P:CTP salvage"/>
    <property type="evidence" value="ECO:0007669"/>
    <property type="project" value="UniProtKB-UniRule"/>
</dbReference>
<dbReference type="GO" id="GO:0044206">
    <property type="term" value="P:UMP salvage"/>
    <property type="evidence" value="ECO:0007669"/>
    <property type="project" value="UniProtKB-UniRule"/>
</dbReference>
<dbReference type="CDD" id="cd02023">
    <property type="entry name" value="UMPK"/>
    <property type="match status" value="1"/>
</dbReference>
<dbReference type="FunFam" id="3.40.50.300:FF:000252">
    <property type="entry name" value="Uridine kinase"/>
    <property type="match status" value="1"/>
</dbReference>
<dbReference type="Gene3D" id="3.40.50.300">
    <property type="entry name" value="P-loop containing nucleotide triphosphate hydrolases"/>
    <property type="match status" value="1"/>
</dbReference>
<dbReference type="HAMAP" id="MF_00551">
    <property type="entry name" value="Uridine_kinase"/>
    <property type="match status" value="1"/>
</dbReference>
<dbReference type="InterPro" id="IPR027417">
    <property type="entry name" value="P-loop_NTPase"/>
</dbReference>
<dbReference type="InterPro" id="IPR006083">
    <property type="entry name" value="PRK/URK"/>
</dbReference>
<dbReference type="InterPro" id="IPR026008">
    <property type="entry name" value="Uridine_kinase"/>
</dbReference>
<dbReference type="InterPro" id="IPR000764">
    <property type="entry name" value="Uridine_kinase-like"/>
</dbReference>
<dbReference type="NCBIfam" id="NF004018">
    <property type="entry name" value="PRK05480.1"/>
    <property type="match status" value="1"/>
</dbReference>
<dbReference type="NCBIfam" id="TIGR00235">
    <property type="entry name" value="udk"/>
    <property type="match status" value="1"/>
</dbReference>
<dbReference type="PANTHER" id="PTHR10285">
    <property type="entry name" value="URIDINE KINASE"/>
    <property type="match status" value="1"/>
</dbReference>
<dbReference type="Pfam" id="PF00485">
    <property type="entry name" value="PRK"/>
    <property type="match status" value="1"/>
</dbReference>
<dbReference type="PRINTS" id="PR00988">
    <property type="entry name" value="URIDINKINASE"/>
</dbReference>
<dbReference type="SUPFAM" id="SSF52540">
    <property type="entry name" value="P-loop containing nucleoside triphosphate hydrolases"/>
    <property type="match status" value="1"/>
</dbReference>